<sequence length="389" mass="42656">MVSVAEIRQAQRAEGPATILAIGTANPANKVEQATYPDFYFKITNSEHKVELKEKFQRMCDKSMIKSRYMYLTEEILKENPSVCEYMAPSLDARQDMVVVEVPRLGKEAAVKAIKEWGQPKSKITHLIFCTTSGVDMPGADYQLTKLLGLRPYVKRYMMYQQGCFAGGTVLRLAKDLAENNKGARVLVVCSEVTAVTFRGPSDTHLDSLVGQALFGDGAAALIVGSDPVPEIEKPIFEMVWTAQTIAPDSEGAIDGHLREAGLTFHLLKDVPGIVSKNIDKALVEAFQPLNISDYNSIFWIAHPGGPAILDQVEQKLALKPEKMKATRDVLSEYGNMSSACVLFILDEMRKKSAQNGLKTTGEGLDWGVLFGFGPGLTIETVVLHSVAI</sequence>
<protein>
    <recommendedName>
        <fullName>Chalcone synthase 5</fullName>
        <ecNumber>2.3.1.74</ecNumber>
    </recommendedName>
    <alternativeName>
        <fullName>Naringenin-chalcone synthase 5</fullName>
    </alternativeName>
</protein>
<name>CHS5_TRISU</name>
<reference key="1">
    <citation type="journal article" date="1995" name="Plant Physiol.">
        <title>Nucleotide sequence of additional members of the gene family encoding chalcone synthase in Trifolium subterraneum.</title>
        <authorList>
            <person name="Howles P.A."/>
            <person name="Arioli T."/>
            <person name="Weinman J.J."/>
        </authorList>
    </citation>
    <scope>NUCLEOTIDE SEQUENCE [GENOMIC DNA]</scope>
    <source>
        <strain>cv. Karridale</strain>
        <tissue>Leaf</tissue>
        <tissue>Stem</tissue>
    </source>
</reference>
<comment type="function">
    <text>The primary product of this enzyme is 4,2',4',6'-tetrahydroxychalcone (also termed naringenin-chalcone or chalcone) which can under specific conditions spontaneously isomerize into naringenin.</text>
</comment>
<comment type="catalytic activity">
    <reaction evidence="1">
        <text>(E)-4-coumaroyl-CoA + 3 malonyl-CoA + 3 H(+) = 2',4,4',6'-tetrahydroxychalcone + 3 CO2 + 4 CoA</text>
        <dbReference type="Rhea" id="RHEA:11128"/>
        <dbReference type="ChEBI" id="CHEBI:15378"/>
        <dbReference type="ChEBI" id="CHEBI:15413"/>
        <dbReference type="ChEBI" id="CHEBI:16526"/>
        <dbReference type="ChEBI" id="CHEBI:57287"/>
        <dbReference type="ChEBI" id="CHEBI:57384"/>
        <dbReference type="ChEBI" id="CHEBI:85008"/>
        <dbReference type="EC" id="2.3.1.74"/>
    </reaction>
</comment>
<comment type="pathway">
    <text>Secondary metabolite biosynthesis; flavonoid biosynthesis.</text>
</comment>
<comment type="induction">
    <text>By wounding and Rhizobium infection.</text>
</comment>
<comment type="similarity">
    <text evidence="2">Belongs to the thiolase-like superfamily. Chalcone/stilbene synthases family.</text>
</comment>
<accession>P51087</accession>
<evidence type="ECO:0000255" key="1">
    <source>
        <dbReference type="PROSITE-ProRule" id="PRU10023"/>
    </source>
</evidence>
<evidence type="ECO:0000305" key="2"/>
<keyword id="KW-0012">Acyltransferase</keyword>
<keyword id="KW-0284">Flavonoid biosynthesis</keyword>
<keyword id="KW-0808">Transferase</keyword>
<feature type="chain" id="PRO_0000216072" description="Chalcone synthase 5">
    <location>
        <begin position="1"/>
        <end position="389"/>
    </location>
</feature>
<feature type="active site" evidence="1">
    <location>
        <position position="164"/>
    </location>
</feature>
<dbReference type="EC" id="2.3.1.74"/>
<dbReference type="EMBL" id="L24517">
    <property type="protein sequence ID" value="AAA73939.1"/>
    <property type="molecule type" value="Genomic_DNA"/>
</dbReference>
<dbReference type="SMR" id="P51087"/>
<dbReference type="OrthoDB" id="1854138at2759"/>
<dbReference type="UniPathway" id="UPA00154"/>
<dbReference type="GO" id="GO:0016210">
    <property type="term" value="F:naringenin-chalcone synthase activity"/>
    <property type="evidence" value="ECO:0007669"/>
    <property type="project" value="UniProtKB-EC"/>
</dbReference>
<dbReference type="GO" id="GO:0009813">
    <property type="term" value="P:flavonoid biosynthetic process"/>
    <property type="evidence" value="ECO:0007669"/>
    <property type="project" value="UniProtKB-UniPathway"/>
</dbReference>
<dbReference type="GO" id="GO:0030639">
    <property type="term" value="P:polyketide biosynthetic process"/>
    <property type="evidence" value="ECO:0007669"/>
    <property type="project" value="TreeGrafter"/>
</dbReference>
<dbReference type="CDD" id="cd00831">
    <property type="entry name" value="CHS_like"/>
    <property type="match status" value="1"/>
</dbReference>
<dbReference type="FunFam" id="3.40.47.10:FF:000014">
    <property type="entry name" value="Chalcone synthase 1"/>
    <property type="match status" value="1"/>
</dbReference>
<dbReference type="FunFam" id="3.40.47.10:FF:000025">
    <property type="entry name" value="Chalcone synthase 2"/>
    <property type="match status" value="1"/>
</dbReference>
<dbReference type="Gene3D" id="3.40.47.10">
    <property type="match status" value="2"/>
</dbReference>
<dbReference type="InterPro" id="IPR012328">
    <property type="entry name" value="Chalcone/stilbene_synt_C"/>
</dbReference>
<dbReference type="InterPro" id="IPR001099">
    <property type="entry name" value="Chalcone/stilbene_synt_N"/>
</dbReference>
<dbReference type="InterPro" id="IPR018088">
    <property type="entry name" value="Chalcone/stilbene_synthase_AS"/>
</dbReference>
<dbReference type="InterPro" id="IPR011141">
    <property type="entry name" value="Polyketide_synthase_type-III"/>
</dbReference>
<dbReference type="InterPro" id="IPR016039">
    <property type="entry name" value="Thiolase-like"/>
</dbReference>
<dbReference type="PANTHER" id="PTHR11877:SF62">
    <property type="entry name" value="CHALCONE SYNTHASE 7"/>
    <property type="match status" value="1"/>
</dbReference>
<dbReference type="PANTHER" id="PTHR11877">
    <property type="entry name" value="HYDROXYMETHYLGLUTARYL-COA SYNTHASE"/>
    <property type="match status" value="1"/>
</dbReference>
<dbReference type="Pfam" id="PF02797">
    <property type="entry name" value="Chal_sti_synt_C"/>
    <property type="match status" value="1"/>
</dbReference>
<dbReference type="Pfam" id="PF00195">
    <property type="entry name" value="Chal_sti_synt_N"/>
    <property type="match status" value="1"/>
</dbReference>
<dbReference type="PIRSF" id="PIRSF000451">
    <property type="entry name" value="PKS_III"/>
    <property type="match status" value="1"/>
</dbReference>
<dbReference type="SUPFAM" id="SSF53901">
    <property type="entry name" value="Thiolase-like"/>
    <property type="match status" value="2"/>
</dbReference>
<dbReference type="PROSITE" id="PS00441">
    <property type="entry name" value="CHALCONE_SYNTH"/>
    <property type="match status" value="1"/>
</dbReference>
<gene>
    <name type="primary">CHS5</name>
</gene>
<organism>
    <name type="scientific">Trifolium subterraneum</name>
    <name type="common">Subterranean clover</name>
    <dbReference type="NCBI Taxonomy" id="3900"/>
    <lineage>
        <taxon>Eukaryota</taxon>
        <taxon>Viridiplantae</taxon>
        <taxon>Streptophyta</taxon>
        <taxon>Embryophyta</taxon>
        <taxon>Tracheophyta</taxon>
        <taxon>Spermatophyta</taxon>
        <taxon>Magnoliopsida</taxon>
        <taxon>eudicotyledons</taxon>
        <taxon>Gunneridae</taxon>
        <taxon>Pentapetalae</taxon>
        <taxon>rosids</taxon>
        <taxon>fabids</taxon>
        <taxon>Fabales</taxon>
        <taxon>Fabaceae</taxon>
        <taxon>Papilionoideae</taxon>
        <taxon>50 kb inversion clade</taxon>
        <taxon>NPAAA clade</taxon>
        <taxon>Hologalegina</taxon>
        <taxon>IRL clade</taxon>
        <taxon>Trifolieae</taxon>
        <taxon>Trifolium</taxon>
    </lineage>
</organism>
<proteinExistence type="evidence at transcript level"/>